<organism>
    <name type="scientific">Ascaris suum</name>
    <name type="common">Pig roundworm</name>
    <name type="synonym">Ascaris lumbricoides</name>
    <dbReference type="NCBI Taxonomy" id="6253"/>
    <lineage>
        <taxon>Eukaryota</taxon>
        <taxon>Metazoa</taxon>
        <taxon>Ecdysozoa</taxon>
        <taxon>Nematoda</taxon>
        <taxon>Chromadorea</taxon>
        <taxon>Rhabditida</taxon>
        <taxon>Spirurina</taxon>
        <taxon>Ascaridomorpha</taxon>
        <taxon>Ascaridoidea</taxon>
        <taxon>Ascarididae</taxon>
        <taxon>Ascaris</taxon>
    </lineage>
</organism>
<feature type="chain" id="PRO_0000174332" description="Trypsin inhibitor">
    <location>
        <begin position="1"/>
        <end position="66"/>
    </location>
</feature>
<feature type="disulfide bond" evidence="1">
    <location>
        <begin position="5"/>
        <end position="28"/>
    </location>
</feature>
<feature type="disulfide bond" evidence="1">
    <location>
        <begin position="16"/>
        <end position="44"/>
    </location>
</feature>
<feature type="disulfide bond" evidence="1">
    <location>
        <begin position="19"/>
        <end position="58"/>
    </location>
</feature>
<feature type="disulfide bond" evidence="1">
    <location>
        <begin position="21"/>
        <end position="38"/>
    </location>
</feature>
<feature type="disulfide bond" evidence="1">
    <location>
        <begin position="43"/>
        <end position="64"/>
    </location>
</feature>
<evidence type="ECO:0000269" key="1">
    <source ref="2"/>
</evidence>
<accession>P01049</accession>
<dbReference type="MEROPS" id="I08.007"/>
<dbReference type="GO" id="GO:0005576">
    <property type="term" value="C:extracellular region"/>
    <property type="evidence" value="ECO:0007669"/>
    <property type="project" value="UniProtKB-SubCell"/>
</dbReference>
<dbReference type="GO" id="GO:0004867">
    <property type="term" value="F:serine-type endopeptidase inhibitor activity"/>
    <property type="evidence" value="ECO:0007669"/>
    <property type="project" value="UniProtKB-KW"/>
</dbReference>
<dbReference type="Gene3D" id="2.10.25.10">
    <property type="entry name" value="Laminin"/>
    <property type="match status" value="1"/>
</dbReference>
<name>ITR2_ASCSU</name>
<keyword id="KW-0903">Direct protein sequencing</keyword>
<keyword id="KW-1015">Disulfide bond</keyword>
<keyword id="KW-0646">Protease inhibitor</keyword>
<keyword id="KW-0964">Secreted</keyword>
<keyword id="KW-0722">Serine protease inhibitor</keyword>
<proteinExistence type="evidence at protein level"/>
<comment type="subcellular location">
    <subcellularLocation>
        <location>Secreted</location>
    </subcellularLocation>
</comment>
<sequence length="66" mass="7194">EAEKCBZZPGWTKGGCETCGCAQKIVPCTRETKPNPQCPRKQCCIASAGFVRDAQGNCIKFEDCPK</sequence>
<reference key="1">
    <citation type="journal article" date="1968" name="Biochim. Biophys. Acta">
        <title>The amino acid sequence of a trypsin inhibitor isolated from ascaris (Ascaris lumbricoides var. suum).</title>
        <authorList>
            <person name="Fraefel W."/>
            <person name="Acher R."/>
        </authorList>
    </citation>
    <scope>PROTEIN SEQUENCE</scope>
</reference>
<reference key="2">
    <citation type="thesis" date="1970" institute="University of Freiburg" country="Germany">
        <authorList>
            <person name="Induni A."/>
        </authorList>
    </citation>
    <scope>DISULFIDE BONDS</scope>
</reference>
<protein>
    <recommendedName>
        <fullName>Trypsin inhibitor</fullName>
    </recommendedName>
</protein>